<comment type="catalytic activity">
    <reaction evidence="1">
        <text>tRNA(Leu) + L-leucine + ATP = L-leucyl-tRNA(Leu) + AMP + diphosphate</text>
        <dbReference type="Rhea" id="RHEA:11688"/>
        <dbReference type="Rhea" id="RHEA-COMP:9613"/>
        <dbReference type="Rhea" id="RHEA-COMP:9622"/>
        <dbReference type="ChEBI" id="CHEBI:30616"/>
        <dbReference type="ChEBI" id="CHEBI:33019"/>
        <dbReference type="ChEBI" id="CHEBI:57427"/>
        <dbReference type="ChEBI" id="CHEBI:78442"/>
        <dbReference type="ChEBI" id="CHEBI:78494"/>
        <dbReference type="ChEBI" id="CHEBI:456215"/>
        <dbReference type="EC" id="6.1.1.4"/>
    </reaction>
</comment>
<comment type="subcellular location">
    <subcellularLocation>
        <location evidence="1">Cytoplasm</location>
    </subcellularLocation>
</comment>
<comment type="similarity">
    <text evidence="1">Belongs to the class-I aminoacyl-tRNA synthetase family.</text>
</comment>
<gene>
    <name evidence="1" type="primary">leuS</name>
    <name type="ordered locus">Vapar_0422</name>
</gene>
<protein>
    <recommendedName>
        <fullName evidence="1">Leucine--tRNA ligase</fullName>
        <ecNumber evidence="1">6.1.1.4</ecNumber>
    </recommendedName>
    <alternativeName>
        <fullName evidence="1">Leucyl-tRNA synthetase</fullName>
        <shortName evidence="1">LeuRS</shortName>
    </alternativeName>
</protein>
<proteinExistence type="inferred from homology"/>
<accession>C5CJ85</accession>
<feature type="chain" id="PRO_1000202230" description="Leucine--tRNA ligase">
    <location>
        <begin position="1"/>
        <end position="876"/>
    </location>
</feature>
<feature type="short sequence motif" description="'HIGH' region">
    <location>
        <begin position="42"/>
        <end position="52"/>
    </location>
</feature>
<feature type="short sequence motif" description="'KMSKS' region">
    <location>
        <begin position="634"/>
        <end position="638"/>
    </location>
</feature>
<feature type="binding site" evidence="1">
    <location>
        <position position="637"/>
    </location>
    <ligand>
        <name>ATP</name>
        <dbReference type="ChEBI" id="CHEBI:30616"/>
    </ligand>
</feature>
<sequence>MNPSYKPSDVESAAQAQWSAADAYRVTEDASRKKYYACSMLPYPSGKLHMGHVRNYTINDMLTRYLRMSGYNVLMPMGWDAFGLPAENAALKNGVPPAKWTYENIDYMRGQLQAMGLAIDWSREIATCDPSYYKWNQWLFLKMLEKGIAYRKTQVVNWDPVDQTVLANEQVIDGKGWRTGATVERREIPGYYLKISDYAEELLEHTQHKLPGWPERVKLMQENWIGKSEGVRFAFTHDIQDASGRLIQDGRMYVFTTRADTIMGVTFCAVAPEHPLAAHAATLDPKVAAFIEECKSGGTTEAELATQEKKGVPTGLTVKHPITEEQVPVWVGNYVLINYGDGAVMGVPAHDERDFAFANKYGIEIIQVVLVDDEPHFDYHRWQDWYGDKQRGVTINSDNFSGMTHKEAVAAVAHALAQKGLGEMQTTWRLRDWGVSRQRYWGTPIPIIHCDEHGAVPVPEKDLPVVLPTDCVPDGSGNPLAKHEGFHAGVVCPVCGKPARRETDTMDTFVDSSWYFMRYCDPKNEQAMVAEGADYWMPMDQYIGGIEHAILHLLYARFWTKVMRDLGLVKVDEPFSKLLTQGMVLNHIYYHRDEKGGKNYHPPLEVTPTLDAQGRIVGGTTADGTKIEYGGVGKMGKSERNGVDPQDLIEKYGADTARLYTMFTAPPEATLEWNDAAVEGSYRFLRRVWNFGVAQADVAPVAFGGQAFGKAAQALRREVHTVLRQVDYDYQRMQYNTVVSGAMKLLNALEGFKPDGSAGDAAALREGLGILLRCLYPATPHITHQLWQHLGYDKELGDLLDAPWPVVDVAALEQDEIELMLQVNGKLRGALRVPAGASKAEIEALALSCDDFVKFAEGAPAKRVIVVPGRLVNVVI</sequence>
<evidence type="ECO:0000255" key="1">
    <source>
        <dbReference type="HAMAP-Rule" id="MF_00049"/>
    </source>
</evidence>
<reference key="1">
    <citation type="journal article" date="2011" name="J. Bacteriol.">
        <title>Complete genome sequence of the metabolically versatile plant growth-promoting endophyte, Variovorax paradoxus S110.</title>
        <authorList>
            <person name="Han J.I."/>
            <person name="Choi H.K."/>
            <person name="Lee S.W."/>
            <person name="Orwin P.M."/>
            <person name="Kim J."/>
            <person name="Laroe S.L."/>
            <person name="Kim T.G."/>
            <person name="O'Neil J."/>
            <person name="Leadbetter J.R."/>
            <person name="Lee S.Y."/>
            <person name="Hur C.G."/>
            <person name="Spain J.C."/>
            <person name="Ovchinnikova G."/>
            <person name="Goodwin L."/>
            <person name="Han C."/>
        </authorList>
    </citation>
    <scope>NUCLEOTIDE SEQUENCE [LARGE SCALE GENOMIC DNA]</scope>
    <source>
        <strain>S110</strain>
    </source>
</reference>
<dbReference type="EC" id="6.1.1.4" evidence="1"/>
<dbReference type="EMBL" id="CP001635">
    <property type="protein sequence ID" value="ACS17085.1"/>
    <property type="molecule type" value="Genomic_DNA"/>
</dbReference>
<dbReference type="SMR" id="C5CJ85"/>
<dbReference type="STRING" id="543728.Vapar_0422"/>
<dbReference type="KEGG" id="vap:Vapar_0422"/>
<dbReference type="eggNOG" id="COG0495">
    <property type="taxonomic scope" value="Bacteria"/>
</dbReference>
<dbReference type="HOGENOM" id="CLU_004427_0_0_4"/>
<dbReference type="OrthoDB" id="9810365at2"/>
<dbReference type="GO" id="GO:0005829">
    <property type="term" value="C:cytosol"/>
    <property type="evidence" value="ECO:0007669"/>
    <property type="project" value="TreeGrafter"/>
</dbReference>
<dbReference type="GO" id="GO:0002161">
    <property type="term" value="F:aminoacyl-tRNA deacylase activity"/>
    <property type="evidence" value="ECO:0007669"/>
    <property type="project" value="InterPro"/>
</dbReference>
<dbReference type="GO" id="GO:0005524">
    <property type="term" value="F:ATP binding"/>
    <property type="evidence" value="ECO:0007669"/>
    <property type="project" value="UniProtKB-UniRule"/>
</dbReference>
<dbReference type="GO" id="GO:0004823">
    <property type="term" value="F:leucine-tRNA ligase activity"/>
    <property type="evidence" value="ECO:0007669"/>
    <property type="project" value="UniProtKB-UniRule"/>
</dbReference>
<dbReference type="GO" id="GO:0006429">
    <property type="term" value="P:leucyl-tRNA aminoacylation"/>
    <property type="evidence" value="ECO:0007669"/>
    <property type="project" value="UniProtKB-UniRule"/>
</dbReference>
<dbReference type="CDD" id="cd07958">
    <property type="entry name" value="Anticodon_Ia_Leu_BEm"/>
    <property type="match status" value="1"/>
</dbReference>
<dbReference type="CDD" id="cd00812">
    <property type="entry name" value="LeuRS_core"/>
    <property type="match status" value="1"/>
</dbReference>
<dbReference type="FunFam" id="1.10.730.10:FF:000003">
    <property type="entry name" value="Leucine--tRNA ligase"/>
    <property type="match status" value="1"/>
</dbReference>
<dbReference type="FunFam" id="3.40.50.620:FF:000003">
    <property type="entry name" value="Leucine--tRNA ligase"/>
    <property type="match status" value="1"/>
</dbReference>
<dbReference type="FunFam" id="3.40.50.620:FF:000056">
    <property type="entry name" value="Leucine--tRNA ligase"/>
    <property type="match status" value="1"/>
</dbReference>
<dbReference type="Gene3D" id="2.20.28.290">
    <property type="match status" value="1"/>
</dbReference>
<dbReference type="Gene3D" id="3.10.20.590">
    <property type="match status" value="1"/>
</dbReference>
<dbReference type="Gene3D" id="3.40.50.620">
    <property type="entry name" value="HUPs"/>
    <property type="match status" value="2"/>
</dbReference>
<dbReference type="Gene3D" id="1.10.730.10">
    <property type="entry name" value="Isoleucyl-tRNA Synthetase, Domain 1"/>
    <property type="match status" value="1"/>
</dbReference>
<dbReference type="HAMAP" id="MF_00049_B">
    <property type="entry name" value="Leu_tRNA_synth_B"/>
    <property type="match status" value="1"/>
</dbReference>
<dbReference type="InterPro" id="IPR001412">
    <property type="entry name" value="aa-tRNA-synth_I_CS"/>
</dbReference>
<dbReference type="InterPro" id="IPR002302">
    <property type="entry name" value="Leu-tRNA-ligase"/>
</dbReference>
<dbReference type="InterPro" id="IPR025709">
    <property type="entry name" value="Leu_tRNA-synth_edit"/>
</dbReference>
<dbReference type="InterPro" id="IPR013155">
    <property type="entry name" value="M/V/L/I-tRNA-synth_anticd-bd"/>
</dbReference>
<dbReference type="InterPro" id="IPR015413">
    <property type="entry name" value="Methionyl/Leucyl_tRNA_Synth"/>
</dbReference>
<dbReference type="InterPro" id="IPR014729">
    <property type="entry name" value="Rossmann-like_a/b/a_fold"/>
</dbReference>
<dbReference type="InterPro" id="IPR009080">
    <property type="entry name" value="tRNAsynth_Ia_anticodon-bd"/>
</dbReference>
<dbReference type="InterPro" id="IPR009008">
    <property type="entry name" value="Val/Leu/Ile-tRNA-synth_edit"/>
</dbReference>
<dbReference type="NCBIfam" id="TIGR00396">
    <property type="entry name" value="leuS_bact"/>
    <property type="match status" value="1"/>
</dbReference>
<dbReference type="PANTHER" id="PTHR43740:SF2">
    <property type="entry name" value="LEUCINE--TRNA LIGASE, MITOCHONDRIAL"/>
    <property type="match status" value="1"/>
</dbReference>
<dbReference type="PANTHER" id="PTHR43740">
    <property type="entry name" value="LEUCYL-TRNA SYNTHETASE"/>
    <property type="match status" value="1"/>
</dbReference>
<dbReference type="Pfam" id="PF08264">
    <property type="entry name" value="Anticodon_1"/>
    <property type="match status" value="1"/>
</dbReference>
<dbReference type="Pfam" id="PF13603">
    <property type="entry name" value="tRNA-synt_1_2"/>
    <property type="match status" value="1"/>
</dbReference>
<dbReference type="Pfam" id="PF09334">
    <property type="entry name" value="tRNA-synt_1g"/>
    <property type="match status" value="1"/>
</dbReference>
<dbReference type="PRINTS" id="PR00985">
    <property type="entry name" value="TRNASYNTHLEU"/>
</dbReference>
<dbReference type="SUPFAM" id="SSF47323">
    <property type="entry name" value="Anticodon-binding domain of a subclass of class I aminoacyl-tRNA synthetases"/>
    <property type="match status" value="1"/>
</dbReference>
<dbReference type="SUPFAM" id="SSF52374">
    <property type="entry name" value="Nucleotidylyl transferase"/>
    <property type="match status" value="1"/>
</dbReference>
<dbReference type="SUPFAM" id="SSF50677">
    <property type="entry name" value="ValRS/IleRS/LeuRS editing domain"/>
    <property type="match status" value="1"/>
</dbReference>
<dbReference type="PROSITE" id="PS00178">
    <property type="entry name" value="AA_TRNA_LIGASE_I"/>
    <property type="match status" value="1"/>
</dbReference>
<name>SYL_VARPS</name>
<keyword id="KW-0030">Aminoacyl-tRNA synthetase</keyword>
<keyword id="KW-0067">ATP-binding</keyword>
<keyword id="KW-0963">Cytoplasm</keyword>
<keyword id="KW-0436">Ligase</keyword>
<keyword id="KW-0547">Nucleotide-binding</keyword>
<keyword id="KW-0648">Protein biosynthesis</keyword>
<organism>
    <name type="scientific">Variovorax paradoxus (strain S110)</name>
    <dbReference type="NCBI Taxonomy" id="543728"/>
    <lineage>
        <taxon>Bacteria</taxon>
        <taxon>Pseudomonadati</taxon>
        <taxon>Pseudomonadota</taxon>
        <taxon>Betaproteobacteria</taxon>
        <taxon>Burkholderiales</taxon>
        <taxon>Comamonadaceae</taxon>
        <taxon>Variovorax</taxon>
    </lineage>
</organism>